<dbReference type="EC" id="2.7.13.3" evidence="13"/>
<dbReference type="EMBL" id="U00006">
    <property type="protein sequence ID" value="AAC43101.1"/>
    <property type="molecule type" value="Genomic_DNA"/>
</dbReference>
<dbReference type="EMBL" id="U00096">
    <property type="protein sequence ID" value="AAC76977.1"/>
    <property type="molecule type" value="Genomic_DNA"/>
</dbReference>
<dbReference type="EMBL" id="AP009048">
    <property type="protein sequence ID" value="BAE77316.1"/>
    <property type="molecule type" value="Genomic_DNA"/>
</dbReference>
<dbReference type="EMBL" id="M28369">
    <property type="protein sequence ID" value="AAA24003.1"/>
    <property type="molecule type" value="Genomic_DNA"/>
</dbReference>
<dbReference type="PIR" id="F65207">
    <property type="entry name" value="F65207"/>
</dbReference>
<dbReference type="RefSeq" id="NP_418431.1">
    <property type="nucleotide sequence ID" value="NC_000913.3"/>
</dbReference>
<dbReference type="RefSeq" id="WP_001211892.1">
    <property type="nucleotide sequence ID" value="NZ_SSZK01000047.1"/>
</dbReference>
<dbReference type="SMR" id="P14377"/>
<dbReference type="BioGRID" id="4263453">
    <property type="interactions" value="21"/>
</dbReference>
<dbReference type="DIP" id="DIP-9981N"/>
<dbReference type="FunCoup" id="P14377">
    <property type="interactions" value="305"/>
</dbReference>
<dbReference type="IntAct" id="P14377">
    <property type="interactions" value="1"/>
</dbReference>
<dbReference type="STRING" id="511145.b4003"/>
<dbReference type="PaxDb" id="511145-b4003"/>
<dbReference type="EnsemblBacteria" id="AAC76977">
    <property type="protein sequence ID" value="AAC76977"/>
    <property type="gene ID" value="b4003"/>
</dbReference>
<dbReference type="GeneID" id="948506"/>
<dbReference type="KEGG" id="ecj:JW3967"/>
<dbReference type="KEGG" id="eco:b4003"/>
<dbReference type="KEGG" id="ecoc:C3026_21620"/>
<dbReference type="PATRIC" id="fig|1411691.4.peg.2707"/>
<dbReference type="EchoBASE" id="EB0008"/>
<dbReference type="eggNOG" id="COG4191">
    <property type="taxonomic scope" value="Bacteria"/>
</dbReference>
<dbReference type="HOGENOM" id="CLU_000445_89_29_6"/>
<dbReference type="InParanoid" id="P14377"/>
<dbReference type="OMA" id="LAQFWFR"/>
<dbReference type="OrthoDB" id="1931120at2"/>
<dbReference type="PhylomeDB" id="P14377"/>
<dbReference type="BioCyc" id="EcoCyc:HYDH-MONOMER"/>
<dbReference type="BioCyc" id="MetaCyc:HYDH-MONOMER"/>
<dbReference type="BRENDA" id="2.7.13.3">
    <property type="organism ID" value="2026"/>
</dbReference>
<dbReference type="PRO" id="PR:P14377"/>
<dbReference type="Proteomes" id="UP000000625">
    <property type="component" value="Chromosome"/>
</dbReference>
<dbReference type="GO" id="GO:0016020">
    <property type="term" value="C:membrane"/>
    <property type="evidence" value="ECO:0000314"/>
    <property type="project" value="EcoliWiki"/>
</dbReference>
<dbReference type="GO" id="GO:0005886">
    <property type="term" value="C:plasma membrane"/>
    <property type="evidence" value="ECO:0000314"/>
    <property type="project" value="EcoCyc"/>
</dbReference>
<dbReference type="GO" id="GO:0005524">
    <property type="term" value="F:ATP binding"/>
    <property type="evidence" value="ECO:0007669"/>
    <property type="project" value="UniProtKB-KW"/>
</dbReference>
<dbReference type="GO" id="GO:0000155">
    <property type="term" value="F:phosphorelay sensor kinase activity"/>
    <property type="evidence" value="ECO:0007669"/>
    <property type="project" value="InterPro"/>
</dbReference>
<dbReference type="GO" id="GO:0004673">
    <property type="term" value="F:protein histidine kinase activity"/>
    <property type="evidence" value="ECO:0000314"/>
    <property type="project" value="EcoCyc"/>
</dbReference>
<dbReference type="GO" id="GO:0036460">
    <property type="term" value="P:cellular response to cell envelope stress"/>
    <property type="evidence" value="ECO:0000270"/>
    <property type="project" value="EcoCyc"/>
</dbReference>
<dbReference type="GO" id="GO:0071284">
    <property type="term" value="P:cellular response to lead ion"/>
    <property type="evidence" value="ECO:0000270"/>
    <property type="project" value="EcoCyc"/>
</dbReference>
<dbReference type="GO" id="GO:0071294">
    <property type="term" value="P:cellular response to zinc ion"/>
    <property type="evidence" value="ECO:0000270"/>
    <property type="project" value="EcoCyc"/>
</dbReference>
<dbReference type="GO" id="GO:0007165">
    <property type="term" value="P:signal transduction"/>
    <property type="evidence" value="ECO:0000314"/>
    <property type="project" value="EcoCyc"/>
</dbReference>
<dbReference type="CDD" id="cd00082">
    <property type="entry name" value="HisKA"/>
    <property type="match status" value="1"/>
</dbReference>
<dbReference type="FunFam" id="3.30.565.10:FF:000006">
    <property type="entry name" value="Sensor histidine kinase WalK"/>
    <property type="match status" value="1"/>
</dbReference>
<dbReference type="FunFam" id="1.10.287.130:FF:000099">
    <property type="entry name" value="Two-component sensor histidine kinase"/>
    <property type="match status" value="1"/>
</dbReference>
<dbReference type="Gene3D" id="1.10.287.130">
    <property type="match status" value="1"/>
</dbReference>
<dbReference type="Gene3D" id="3.30.565.10">
    <property type="entry name" value="Histidine kinase-like ATPase, C-terminal domain"/>
    <property type="match status" value="1"/>
</dbReference>
<dbReference type="Gene3D" id="3.30.450.20">
    <property type="entry name" value="PAS domain"/>
    <property type="match status" value="1"/>
</dbReference>
<dbReference type="InterPro" id="IPR036890">
    <property type="entry name" value="HATPase_C_sf"/>
</dbReference>
<dbReference type="InterPro" id="IPR005467">
    <property type="entry name" value="His_kinase_dom"/>
</dbReference>
<dbReference type="InterPro" id="IPR003661">
    <property type="entry name" value="HisK_dim/P_dom"/>
</dbReference>
<dbReference type="InterPro" id="IPR036097">
    <property type="entry name" value="HisK_dim/P_sf"/>
</dbReference>
<dbReference type="InterPro" id="IPR029151">
    <property type="entry name" value="Sensor-like_sf"/>
</dbReference>
<dbReference type="InterPro" id="IPR004358">
    <property type="entry name" value="Sig_transdc_His_kin-like_C"/>
</dbReference>
<dbReference type="NCBIfam" id="NF007688">
    <property type="entry name" value="PRK10364.1"/>
    <property type="match status" value="1"/>
</dbReference>
<dbReference type="PANTHER" id="PTHR43065">
    <property type="entry name" value="SENSOR HISTIDINE KINASE"/>
    <property type="match status" value="1"/>
</dbReference>
<dbReference type="PANTHER" id="PTHR43065:SF54">
    <property type="entry name" value="SENSOR PROTEIN ZRAS"/>
    <property type="match status" value="1"/>
</dbReference>
<dbReference type="Pfam" id="PF02518">
    <property type="entry name" value="HATPase_c"/>
    <property type="match status" value="1"/>
</dbReference>
<dbReference type="Pfam" id="PF00512">
    <property type="entry name" value="HisKA"/>
    <property type="match status" value="1"/>
</dbReference>
<dbReference type="PRINTS" id="PR00344">
    <property type="entry name" value="BCTRLSENSOR"/>
</dbReference>
<dbReference type="SMART" id="SM00387">
    <property type="entry name" value="HATPase_c"/>
    <property type="match status" value="1"/>
</dbReference>
<dbReference type="SMART" id="SM00388">
    <property type="entry name" value="HisKA"/>
    <property type="match status" value="1"/>
</dbReference>
<dbReference type="SUPFAM" id="SSF55874">
    <property type="entry name" value="ATPase domain of HSP90 chaperone/DNA topoisomerase II/histidine kinase"/>
    <property type="match status" value="1"/>
</dbReference>
<dbReference type="SUPFAM" id="SSF47384">
    <property type="entry name" value="Homodimeric domain of signal transducing histidine kinase"/>
    <property type="match status" value="1"/>
</dbReference>
<dbReference type="SUPFAM" id="SSF103190">
    <property type="entry name" value="Sensory domain-like"/>
    <property type="match status" value="1"/>
</dbReference>
<dbReference type="PROSITE" id="PS50109">
    <property type="entry name" value="HIS_KIN"/>
    <property type="match status" value="1"/>
</dbReference>
<name>ZRAS_ECOLI</name>
<gene>
    <name evidence="10" type="primary">zraS</name>
    <name evidence="11" type="synonym">hydH</name>
    <name type="ordered locus">b4003</name>
    <name type="ordered locus">JW3967</name>
</gene>
<reference key="1">
    <citation type="journal article" date="1993" name="Nucleic Acids Res.">
        <title>Analysis of the Escherichia coli genome. IV. DNA sequence of the region from 89.2 to 92.8 minutes.</title>
        <authorList>
            <person name="Blattner F.R."/>
            <person name="Burland V.D."/>
            <person name="Plunkett G. III"/>
            <person name="Sofia H.J."/>
            <person name="Daniels D.L."/>
        </authorList>
    </citation>
    <scope>NUCLEOTIDE SEQUENCE [LARGE SCALE GENOMIC DNA]</scope>
    <source>
        <strain>K12 / MG1655 / ATCC 47076</strain>
    </source>
</reference>
<reference key="2">
    <citation type="journal article" date="1997" name="Science">
        <title>The complete genome sequence of Escherichia coli K-12.</title>
        <authorList>
            <person name="Blattner F.R."/>
            <person name="Plunkett G. III"/>
            <person name="Bloch C.A."/>
            <person name="Perna N.T."/>
            <person name="Burland V."/>
            <person name="Riley M."/>
            <person name="Collado-Vides J."/>
            <person name="Glasner J.D."/>
            <person name="Rode C.K."/>
            <person name="Mayhew G.F."/>
            <person name="Gregor J."/>
            <person name="Davis N.W."/>
            <person name="Kirkpatrick H.A."/>
            <person name="Goeden M.A."/>
            <person name="Rose D.J."/>
            <person name="Mau B."/>
            <person name="Shao Y."/>
        </authorList>
    </citation>
    <scope>NUCLEOTIDE SEQUENCE [LARGE SCALE GENOMIC DNA]</scope>
    <source>
        <strain>K12 / MG1655 / ATCC 47076</strain>
    </source>
</reference>
<reference key="3">
    <citation type="journal article" date="2006" name="Mol. Syst. Biol.">
        <title>Highly accurate genome sequences of Escherichia coli K-12 strains MG1655 and W3110.</title>
        <authorList>
            <person name="Hayashi K."/>
            <person name="Morooka N."/>
            <person name="Yamamoto Y."/>
            <person name="Fujita K."/>
            <person name="Isono K."/>
            <person name="Choi S."/>
            <person name="Ohtsubo E."/>
            <person name="Baba T."/>
            <person name="Wanner B.L."/>
            <person name="Mori H."/>
            <person name="Horiuchi T."/>
        </authorList>
    </citation>
    <scope>NUCLEOTIDE SEQUENCE [LARGE SCALE GENOMIC DNA]</scope>
    <source>
        <strain>K12 / W3110 / ATCC 27325 / DSM 5911</strain>
    </source>
</reference>
<reference key="4">
    <citation type="journal article" date="1989" name="J. Bacteriol.">
        <title>Initial cloning and sequencing of hydHG, an operon homologous to ntrBC and regulating the labile hydrogenase activity in Escherichia coli K-12.</title>
        <authorList>
            <person name="Stoker K."/>
            <person name="Reijnders W.N.M."/>
            <person name="Oltmann L.F."/>
            <person name="Stouthamer A.H."/>
        </authorList>
    </citation>
    <scope>NUCLEOTIDE SEQUENCE [GENOMIC DNA] OF 328-465</scope>
    <source>
        <strain>K12</strain>
    </source>
</reference>
<reference key="5">
    <citation type="journal article" date="2001" name="J. Mol. Biol.">
        <title>The hydH/G genes from Escherichia coli code for a zinc and lead responsive two-component regulatory system.</title>
        <authorList>
            <person name="Leonhartsberger S."/>
            <person name="Huber A."/>
            <person name="Lottspeich F."/>
            <person name="Boeck A."/>
        </authorList>
    </citation>
    <scope>FUNCTION</scope>
    <scope>SUBCELLULAR LOCATION</scope>
    <scope>INDUCTION</scope>
    <source>
        <strain>K12 / MC4100 / ATCC 35695 / DSM 6574</strain>
    </source>
</reference>
<reference key="6">
    <citation type="journal article" date="2005" name="J. Biol. Chem.">
        <title>Functional characterization in vitro of all two-component signal transduction systems from Escherichia coli.</title>
        <authorList>
            <person name="Yamamoto K."/>
            <person name="Hirao K."/>
            <person name="Oshima T."/>
            <person name="Aiba H."/>
            <person name="Utsumi R."/>
            <person name="Ishihama A."/>
        </authorList>
    </citation>
    <scope>FUNCTION</scope>
    <scope>AUTOPHOSPHORYLATION</scope>
    <source>
        <strain>K12 / W3110 / ATCC 27325 / DSM 5911</strain>
    </source>
</reference>
<reference key="7">
    <citation type="journal article" date="2005" name="Science">
        <title>Global topology analysis of the Escherichia coli inner membrane proteome.</title>
        <authorList>
            <person name="Daley D.O."/>
            <person name="Rapp M."/>
            <person name="Granseth E."/>
            <person name="Melen K."/>
            <person name="Drew D."/>
            <person name="von Heijne G."/>
        </authorList>
    </citation>
    <scope>SUBCELLULAR LOCATION</scope>
    <source>
        <strain>K12 / MG1655 / ATCC 47076</strain>
    </source>
</reference>
<reference key="8">
    <citation type="journal article" date="2015" name="Biochem. J.">
        <title>Biophysical and physiological characterization of ZraP from Escherichia coli, the periplasmic accessory protein of the atypical ZraSR two-component system.</title>
        <authorList>
            <person name="Petit-Haertlein I."/>
            <person name="Rome K."/>
            <person name="de Rosny E."/>
            <person name="Molton F."/>
            <person name="Duboc C."/>
            <person name="Gueguen E."/>
            <person name="Rodrigue A."/>
            <person name="Coves J."/>
        </authorList>
    </citation>
    <scope>FUNCTION</scope>
    <scope>ACTIVITY REGULATION</scope>
    <scope>INDUCTION</scope>
    <scope>DISRUPTION PHENOTYPE</scope>
    <source>
        <strain>K12</strain>
    </source>
</reference>
<reference key="9">
    <citation type="journal article" date="2018" name="J. Mol. Biol.">
        <title>The Two-Component System ZraPSR Is a Novel ESR that Contributes to Intrinsic Antibiotic Tolerance in Escherichia coli.</title>
        <authorList>
            <person name="Rome K."/>
            <person name="Borde C."/>
            <person name="Taher R."/>
            <person name="Cayron J."/>
            <person name="Lesterlin C."/>
            <person name="Gueguen E."/>
            <person name="De Rosny E."/>
            <person name="Rodrigue A."/>
        </authorList>
    </citation>
    <scope>FUNCTION</scope>
    <source>
        <strain>K12</strain>
    </source>
</reference>
<reference key="10">
    <citation type="journal article" date="2021" name="Biochim. Biophys. Acta">
        <title>A structure-function study of ZraP and ZraS provides new insights into the two-component system Zra.</title>
        <authorList>
            <person name="Taher R."/>
            <person name="de Rosny E."/>
        </authorList>
    </citation>
    <scope>FUNCTION</scope>
    <scope>ZINC-BINDING</scope>
    <scope>DOMAIN</scope>
</reference>
<feature type="chain" id="PRO_0000074909" description="Sensor histidine kinase ZraS">
    <location>
        <begin position="1"/>
        <end position="465"/>
    </location>
</feature>
<feature type="topological domain" description="Cytoplasmic" evidence="14">
    <location>
        <begin position="1"/>
        <end position="14"/>
    </location>
</feature>
<feature type="transmembrane region" description="Helical" evidence="1">
    <location>
        <begin position="15"/>
        <end position="35"/>
    </location>
</feature>
<feature type="topological domain" description="Periplasmic" evidence="14">
    <location>
        <begin position="36"/>
        <end position="201"/>
    </location>
</feature>
<feature type="transmembrane region" description="Helical" evidence="1">
    <location>
        <begin position="202"/>
        <end position="222"/>
    </location>
</feature>
<feature type="topological domain" description="Cytoplasmic" evidence="14">
    <location>
        <begin position="223"/>
        <end position="465"/>
    </location>
</feature>
<feature type="domain" description="Histidine kinase" evidence="2">
    <location>
        <begin position="251"/>
        <end position="458"/>
    </location>
</feature>
<feature type="modified residue" description="Phosphohistidine; by autocatalysis" evidence="2">
    <location>
        <position position="254"/>
    </location>
</feature>
<feature type="sequence conflict" description="In Ref. 4; AAA24003." evidence="12" ref="4">
    <original>L</original>
    <variation>V</variation>
    <location>
        <position position="361"/>
    </location>
</feature>
<feature type="sequence conflict" description="In Ref. 4; AAA24003." evidence="12" ref="4">
    <original>SESGA</original>
    <variation>TKAG</variation>
    <location>
        <begin position="383"/>
        <end position="387"/>
    </location>
</feature>
<evidence type="ECO:0000255" key="1"/>
<evidence type="ECO:0000255" key="2">
    <source>
        <dbReference type="PROSITE-ProRule" id="PRU00107"/>
    </source>
</evidence>
<evidence type="ECO:0000269" key="3">
    <source>
    </source>
</evidence>
<evidence type="ECO:0000269" key="4">
    <source>
    </source>
</evidence>
<evidence type="ECO:0000269" key="5">
    <source>
    </source>
</evidence>
<evidence type="ECO:0000269" key="6">
    <source>
    </source>
</evidence>
<evidence type="ECO:0000269" key="7">
    <source>
    </source>
</evidence>
<evidence type="ECO:0000269" key="8">
    <source>
    </source>
</evidence>
<evidence type="ECO:0000269" key="9">
    <source>
    </source>
</evidence>
<evidence type="ECO:0000303" key="10">
    <source>
    </source>
</evidence>
<evidence type="ECO:0000303" key="11">
    <source>
    </source>
</evidence>
<evidence type="ECO:0000305" key="12"/>
<evidence type="ECO:0000305" key="13">
    <source>
    </source>
</evidence>
<evidence type="ECO:0000305" key="14">
    <source>
    </source>
</evidence>
<protein>
    <recommendedName>
        <fullName evidence="12">Sensor histidine kinase ZraS</fullName>
        <ecNumber evidence="13">2.7.13.3</ecNumber>
    </recommendedName>
</protein>
<organism>
    <name type="scientific">Escherichia coli (strain K12)</name>
    <dbReference type="NCBI Taxonomy" id="83333"/>
    <lineage>
        <taxon>Bacteria</taxon>
        <taxon>Pseudomonadati</taxon>
        <taxon>Pseudomonadota</taxon>
        <taxon>Gammaproteobacteria</taxon>
        <taxon>Enterobacterales</taxon>
        <taxon>Enterobacteriaceae</taxon>
        <taxon>Escherichia</taxon>
    </lineage>
</organism>
<keyword id="KW-0067">ATP-binding</keyword>
<keyword id="KW-0997">Cell inner membrane</keyword>
<keyword id="KW-1003">Cell membrane</keyword>
<keyword id="KW-0418">Kinase</keyword>
<keyword id="KW-0472">Membrane</keyword>
<keyword id="KW-0547">Nucleotide-binding</keyword>
<keyword id="KW-0597">Phosphoprotein</keyword>
<keyword id="KW-1185">Reference proteome</keyword>
<keyword id="KW-0346">Stress response</keyword>
<keyword id="KW-0808">Transferase</keyword>
<keyword id="KW-0812">Transmembrane</keyword>
<keyword id="KW-1133">Transmembrane helix</keyword>
<keyword id="KW-0902">Two-component regulatory system</keyword>
<keyword id="KW-0862">Zinc</keyword>
<proteinExistence type="evidence at protein level"/>
<comment type="function">
    <text evidence="3 4 6 8 9">Part of the Zra signaling pathway, an envelope stress response (ESR) system composed of the periplasmic accessory protein ZraP, the histidine kinase ZraS and the transcriptional regulator ZraR (PubMed:26438879, PubMed:30389436, PubMed:33309686). The ZraPSR system contributes to antibiotic resistance and is important for membrane integrity in the presence of membrane-targeting biocides (PubMed:30389436). ZraS is a member of the two-component regulatory system ZraS/ZraR (PubMed:11243806). Functions as a membrane-associated sensor kinase that phosphorylates ZraR in response to high concentrations of Zn(2+) or Pb(2+) in the medium (PubMed:11243806, PubMed:15522865). Binds one zinc molecule with high affinity via its periplasmic domain, inducing a conformational change that is transmitted to the histidine kinase domain and leads to the activation of ZraR (PubMed:33309686). The system has no direct role in zinc or copper resistance (PubMed:26438879).</text>
</comment>
<comment type="catalytic activity">
    <reaction evidence="13">
        <text>ATP + protein L-histidine = ADP + protein N-phospho-L-histidine.</text>
        <dbReference type="EC" id="2.7.13.3"/>
    </reaction>
</comment>
<comment type="activity regulation">
    <text evidence="6">Activity of the ZraS/ZraR two-component system is repressed by the zinc-bound form of ZraP, which probably interacts with the periplasmic region of ZraS.</text>
</comment>
<comment type="subcellular location">
    <subcellularLocation>
        <location evidence="3 5">Cell inner membrane</location>
        <topology evidence="1">Multi-pass membrane protein</topology>
    </subcellularLocation>
</comment>
<comment type="induction">
    <text evidence="3 6">Induced in response to high concentrations of Zn(2+) or Pb(2+) (PubMed:26438879). Expression of the zraSR operon is positively autoregulated by ZraR (PubMed:11243806). Expression also requires the RNA polymerase sigma-54 factor (PubMed:11243806).</text>
</comment>
<comment type="domain">
    <text evidence="9">Contains one high-affinity Zn(2+) binding site per monomer.</text>
</comment>
<comment type="PTM">
    <text evidence="4">Autophosphorylated.</text>
</comment>
<comment type="disruption phenotype">
    <text evidence="6">Deletion of the gene does not affect the minimum inhibitory concentration (MIC) of E.coli for zinc or copper.</text>
</comment>
<comment type="caution">
    <text evidence="3 7">Was originally thought to be involved in the regulation of the labile hydrogenase activity (PubMed:2666400). It was shown later that this activity results from the non-specific action of overproduced ZraR on hydrogenase 3 formation (PubMed:11243806).</text>
</comment>
<accession>P14377</accession>
<accession>Q2M8U0</accession>
<sequence>MRFMQRSKDSLAKWLSAILPVVIVGLVGLFAVTVIRDYGRASEADRQALLEKGNVLIRALESGSRVGMGMRMHHVQQQALLEEMAGQPGVLWFAVTDAQGIIILHSDPDKVGRALYSPDEMQKLKPEENSRWRLLGKTETTPALEVYRLFQPMSAPWRHGMHNMPRCNGKAVPQVDAQQAIFIAVDASDLVATQSGEKRNTLIILFALATVLLASVLSFFWYRRYLRSRQLLQDEMKRKEKLVALGHLAAGVAHEIRNPLSSIKGLAKYFAERAPAGGEAHQLAQVMAKEADRLNRVVSELLELVKPTHLALQAVDLNTLINHSLQLVSQDANSREIQLRFTANDTLPEIQADPDRLTQVLLNLYLNAIQAIGQHGVISVTASESGAGVKISVTDSGKGIAADQLDAIFTPYFTTKAEGTGLGLAVVHNIVEQHGGTIQVASQEGKGSTFTLWLPVNITRKDPQG</sequence>